<comment type="function">
    <text evidence="1">May participate in nuclear egress of viral particles. Plays a role in the dispersal of several host nucleolar proteins including NCL/nucleolin and NPM1. Since deletion of host NCL/nucleolin negatively impact on nuclear egress, UL24 supposedly acts on this process through its effect on host nucleoli (By similarity).</text>
</comment>
<comment type="subcellular location">
    <subcellularLocation>
        <location evidence="1">Virion</location>
    </subcellularLocation>
    <subcellularLocation>
        <location evidence="1">Host cytoplasm</location>
    </subcellularLocation>
    <subcellularLocation>
        <location evidence="1">Host nucleus</location>
        <location evidence="1">Host nucleolus</location>
    </subcellularLocation>
    <subcellularLocation>
        <location evidence="1">Host Golgi apparatus</location>
    </subcellularLocation>
</comment>
<comment type="induction">
    <text>Expressed late in the infection cycle.</text>
</comment>
<comment type="similarity">
    <text evidence="2">Belongs to the herpesviridae UL24 family.</text>
</comment>
<feature type="chain" id="PRO_0000115988" description="Protein UL24 homolog">
    <location>
        <begin position="1"/>
        <end position="258"/>
    </location>
</feature>
<evidence type="ECO:0000250" key="1"/>
<evidence type="ECO:0000305" key="2"/>
<organism>
    <name type="scientific">Varicella-zoster virus (strain Dumas)</name>
    <name type="common">HHV-3</name>
    <name type="synonym">Human herpesvirus 3</name>
    <dbReference type="NCBI Taxonomy" id="10338"/>
    <lineage>
        <taxon>Viruses</taxon>
        <taxon>Duplodnaviria</taxon>
        <taxon>Heunggongvirae</taxon>
        <taxon>Peploviricota</taxon>
        <taxon>Herviviricetes</taxon>
        <taxon>Herpesvirales</taxon>
        <taxon>Orthoherpesviridae</taxon>
        <taxon>Alphaherpesvirinae</taxon>
        <taxon>Varicellovirus</taxon>
        <taxon>Varicellovirus humanalpha3</taxon>
        <taxon>Human herpesvirus 3</taxon>
    </lineage>
</organism>
<dbReference type="EMBL" id="X04370">
    <property type="protein sequence ID" value="CAA27918.1"/>
    <property type="molecule type" value="Genomic_DNA"/>
</dbReference>
<dbReference type="PIR" id="I27214">
    <property type="entry name" value="WZBE35"/>
</dbReference>
<dbReference type="Proteomes" id="UP000002602">
    <property type="component" value="Genome"/>
</dbReference>
<dbReference type="GO" id="GO:0044177">
    <property type="term" value="C:host cell Golgi apparatus"/>
    <property type="evidence" value="ECO:0007669"/>
    <property type="project" value="UniProtKB-SubCell"/>
</dbReference>
<dbReference type="GO" id="GO:0044196">
    <property type="term" value="C:host cell nucleolus"/>
    <property type="evidence" value="ECO:0007669"/>
    <property type="project" value="UniProtKB-SubCell"/>
</dbReference>
<dbReference type="GO" id="GO:0044423">
    <property type="term" value="C:virion component"/>
    <property type="evidence" value="ECO:0007669"/>
    <property type="project" value="UniProtKB-KW"/>
</dbReference>
<dbReference type="InterPro" id="IPR002580">
    <property type="entry name" value="Herpes_UL24"/>
</dbReference>
<dbReference type="Pfam" id="PF01646">
    <property type="entry name" value="Herpes_UL24"/>
    <property type="match status" value="1"/>
</dbReference>
<accession>P09288</accession>
<name>UL24_VZVD</name>
<proteinExistence type="evidence at transcript level"/>
<reference key="1">
    <citation type="journal article" date="1986" name="J. Gen. Virol.">
        <title>The complete DNA sequence of varicella-zoster virus.</title>
        <authorList>
            <person name="Davison A.J."/>
            <person name="Scott J.E."/>
        </authorList>
    </citation>
    <scope>NUCLEOTIDE SEQUENCE [LARGE SCALE GENOMIC DNA]</scope>
</reference>
<keyword id="KW-1035">Host cytoplasm</keyword>
<keyword id="KW-1040">Host Golgi apparatus</keyword>
<keyword id="KW-1048">Host nucleus</keyword>
<keyword id="KW-0426">Late protein</keyword>
<keyword id="KW-1185">Reference proteome</keyword>
<keyword id="KW-0946">Virion</keyword>
<protein>
    <recommendedName>
        <fullName>Protein UL24 homolog</fullName>
    </recommendedName>
</protein>
<sequence>MSASRIRAKCFRLGQRCHTRFYDVLKKDIDNVRRGFADAFNPRLAKLLSPLSHVDVQRAVRISMSFEVNLGRRRPDCVCIIQTESSGAGKTVCFIVELKSCRFSANIHTPTKYHQFCEGMRQLRDTMALIKETTPTGSDEIMVTPLLVFVSQRGLNLLQVTRLPPKVIHGNLVMLASHLENVAEYTPPIRSVRERRRLCKKKIHVCSLAKKRAKSCHRSALTKFEENAACGVDLPLRRPSLGACGGILQSITGMFSHG</sequence>
<gene>
    <name type="ORF">ORF35</name>
</gene>
<organismHost>
    <name type="scientific">Homo sapiens</name>
    <name type="common">Human</name>
    <dbReference type="NCBI Taxonomy" id="9606"/>
</organismHost>